<name>MSAB2_STRPN</name>
<organism>
    <name type="scientific">Streptococcus pneumoniae serotype 4 (strain ATCC BAA-334 / TIGR4)</name>
    <dbReference type="NCBI Taxonomy" id="170187"/>
    <lineage>
        <taxon>Bacteria</taxon>
        <taxon>Bacillati</taxon>
        <taxon>Bacillota</taxon>
        <taxon>Bacilli</taxon>
        <taxon>Lactobacillales</taxon>
        <taxon>Streptococcaceae</taxon>
        <taxon>Streptococcus</taxon>
    </lineage>
</organism>
<sequence>MHEIYLAGGCFWGVEEYFSRVPGVTDAVSGYANGRGETTKYELINQTGHAETVHVTYDAKQISLKEILLHYFRIINPTSKNKQGNDVGTQYRTGVYYTDDKDLEVINQVFDEVAKKYDQPLAVEKENLKNFVVAEDYHQDYLKKNPNGYCHINVNQAAYPVIDASKYPKPSDEELKKTLSPEEYAVTQENQTERAFSNRYWDKFESGIYVDIATGEPLFSSKDKFESGCGWPSFTQPISPDVVTYKEDKSYNMTRMEVRSRVGDSHLGHVFTDGPQDKGGLRYCINSLSIRFIPKDQMEEKGYAYLLDYVD</sequence>
<proteinExistence type="inferred from homology"/>
<dbReference type="EC" id="1.8.4.11"/>
<dbReference type="EC" id="1.8.4.12"/>
<dbReference type="EMBL" id="AE005672">
    <property type="protein sequence ID" value="AAK74805.1"/>
    <property type="molecule type" value="Genomic_DNA"/>
</dbReference>
<dbReference type="PIR" id="D95076">
    <property type="entry name" value="D95076"/>
</dbReference>
<dbReference type="SMR" id="P65443"/>
<dbReference type="PaxDb" id="170187-SP_0660"/>
<dbReference type="EnsemblBacteria" id="AAK74805">
    <property type="protein sequence ID" value="AAK74805"/>
    <property type="gene ID" value="SP_0660"/>
</dbReference>
<dbReference type="KEGG" id="spn:SP_0660"/>
<dbReference type="eggNOG" id="COG0225">
    <property type="taxonomic scope" value="Bacteria"/>
</dbReference>
<dbReference type="eggNOG" id="COG0229">
    <property type="taxonomic scope" value="Bacteria"/>
</dbReference>
<dbReference type="PhylomeDB" id="P65443"/>
<dbReference type="Proteomes" id="UP000000585">
    <property type="component" value="Chromosome"/>
</dbReference>
<dbReference type="GO" id="GO:0005737">
    <property type="term" value="C:cytoplasm"/>
    <property type="evidence" value="ECO:0007669"/>
    <property type="project" value="TreeGrafter"/>
</dbReference>
<dbReference type="GO" id="GO:0033744">
    <property type="term" value="F:L-methionine:thioredoxin-disulfide S-oxidoreductase activity"/>
    <property type="evidence" value="ECO:0007669"/>
    <property type="project" value="RHEA"/>
</dbReference>
<dbReference type="GO" id="GO:0033743">
    <property type="term" value="F:peptide-methionine (R)-S-oxide reductase activity"/>
    <property type="evidence" value="ECO:0007669"/>
    <property type="project" value="UniProtKB-UniRule"/>
</dbReference>
<dbReference type="GO" id="GO:0008113">
    <property type="term" value="F:peptide-methionine (S)-S-oxide reductase activity"/>
    <property type="evidence" value="ECO:0007669"/>
    <property type="project" value="UniProtKB-UniRule"/>
</dbReference>
<dbReference type="GO" id="GO:0036211">
    <property type="term" value="P:protein modification process"/>
    <property type="evidence" value="ECO:0007669"/>
    <property type="project" value="UniProtKB-UniRule"/>
</dbReference>
<dbReference type="GO" id="GO:0030091">
    <property type="term" value="P:protein repair"/>
    <property type="evidence" value="ECO:0007669"/>
    <property type="project" value="InterPro"/>
</dbReference>
<dbReference type="GO" id="GO:0006979">
    <property type="term" value="P:response to oxidative stress"/>
    <property type="evidence" value="ECO:0007669"/>
    <property type="project" value="InterPro"/>
</dbReference>
<dbReference type="FunFam" id="3.30.1060.10:FF:000007">
    <property type="entry name" value="Peptide methionine sulfoxide reductase msrA/msrB"/>
    <property type="match status" value="1"/>
</dbReference>
<dbReference type="FunFam" id="2.170.150.20:FF:000003">
    <property type="entry name" value="Peptide methionine sulfoxide reductase MsrB"/>
    <property type="match status" value="1"/>
</dbReference>
<dbReference type="Gene3D" id="2.170.150.20">
    <property type="entry name" value="Peptide methionine sulfoxide reductase"/>
    <property type="match status" value="1"/>
</dbReference>
<dbReference type="Gene3D" id="3.30.1060.10">
    <property type="entry name" value="Peptide methionine sulphoxide reductase MsrA"/>
    <property type="match status" value="1"/>
</dbReference>
<dbReference type="HAMAP" id="MF_01401">
    <property type="entry name" value="MsrA"/>
    <property type="match status" value="1"/>
</dbReference>
<dbReference type="HAMAP" id="MF_01400">
    <property type="entry name" value="MsrB"/>
    <property type="match status" value="1"/>
</dbReference>
<dbReference type="InterPro" id="IPR002569">
    <property type="entry name" value="Met_Sox_Rdtase_MsrA_dom"/>
</dbReference>
<dbReference type="InterPro" id="IPR036509">
    <property type="entry name" value="Met_Sox_Rdtase_MsrA_sf"/>
</dbReference>
<dbReference type="InterPro" id="IPR028427">
    <property type="entry name" value="Met_Sox_Rdtase_MsrB"/>
</dbReference>
<dbReference type="InterPro" id="IPR002579">
    <property type="entry name" value="Met_Sox_Rdtase_MsrB_dom"/>
</dbReference>
<dbReference type="InterPro" id="IPR011057">
    <property type="entry name" value="Mss4-like_sf"/>
</dbReference>
<dbReference type="NCBIfam" id="TIGR00401">
    <property type="entry name" value="msrA"/>
    <property type="match status" value="1"/>
</dbReference>
<dbReference type="NCBIfam" id="TIGR00357">
    <property type="entry name" value="peptide-methionine (R)-S-oxide reductase MsrB"/>
    <property type="match status" value="1"/>
</dbReference>
<dbReference type="PANTHER" id="PTHR10173">
    <property type="entry name" value="METHIONINE SULFOXIDE REDUCTASE"/>
    <property type="match status" value="1"/>
</dbReference>
<dbReference type="PANTHER" id="PTHR10173:SF59">
    <property type="entry name" value="PEPTIDE METHIONINE SULFOXIDE REDUCTASE MSRA_MSRB"/>
    <property type="match status" value="1"/>
</dbReference>
<dbReference type="Pfam" id="PF01625">
    <property type="entry name" value="PMSR"/>
    <property type="match status" value="1"/>
</dbReference>
<dbReference type="Pfam" id="PF01641">
    <property type="entry name" value="SelR"/>
    <property type="match status" value="1"/>
</dbReference>
<dbReference type="SUPFAM" id="SSF51316">
    <property type="entry name" value="Mss4-like"/>
    <property type="match status" value="1"/>
</dbReference>
<dbReference type="SUPFAM" id="SSF55068">
    <property type="entry name" value="Peptide methionine sulfoxide reductase"/>
    <property type="match status" value="1"/>
</dbReference>
<dbReference type="PROSITE" id="PS51790">
    <property type="entry name" value="MSRB"/>
    <property type="match status" value="1"/>
</dbReference>
<protein>
    <recommendedName>
        <fullName>Peptide methionine sulfoxide reductase MsrA/MsrB 2</fullName>
    </recommendedName>
    <domain>
        <recommendedName>
            <fullName>Peptide methionine sulfoxide reductase MsrA</fullName>
            <shortName>Protein-methionine-S-oxide reductase</shortName>
            <ecNumber>1.8.4.11</ecNumber>
        </recommendedName>
        <alternativeName>
            <fullName>Peptide-methionine (S)-S-oxide reductase</fullName>
            <shortName>Peptide Met(O) reductase</shortName>
        </alternativeName>
    </domain>
    <domain>
        <recommendedName>
            <fullName>Peptide methionine sulfoxide reductase MsrB</fullName>
            <ecNumber>1.8.4.12</ecNumber>
        </recommendedName>
        <alternativeName>
            <fullName>Peptide-methionine (R)-S-oxide reductase</fullName>
        </alternativeName>
    </domain>
</protein>
<accession>P65443</accession>
<accession>Q97RX3</accession>
<evidence type="ECO:0000250" key="1"/>
<evidence type="ECO:0000255" key="2">
    <source>
        <dbReference type="PROSITE-ProRule" id="PRU01126"/>
    </source>
</evidence>
<evidence type="ECO:0000305" key="3"/>
<feature type="chain" id="PRO_0000138519" description="Peptide methionine sulfoxide reductase MsrA/MsrB 2">
    <location>
        <begin position="1"/>
        <end position="311"/>
    </location>
</feature>
<feature type="domain" description="MsrB" evidence="2">
    <location>
        <begin position="172"/>
        <end position="295"/>
    </location>
</feature>
<feature type="region of interest" description="Peptide methionine sulfoxide reductase A">
    <location>
        <begin position="1"/>
        <end position="155"/>
    </location>
</feature>
<feature type="active site" evidence="1">
    <location>
        <position position="10"/>
    </location>
</feature>
<feature type="active site" description="Nucleophile" evidence="2">
    <location>
        <position position="284"/>
    </location>
</feature>
<comment type="function">
    <text evidence="1">Has an important function as a repair enzyme for proteins that have been inactivated by oxidation. Catalyzes the reversible oxidation-reduction of methionine sulfoxide in proteins to methionine (By similarity).</text>
</comment>
<comment type="catalytic activity">
    <reaction>
        <text>L-methionyl-[protein] + [thioredoxin]-disulfide + H2O = L-methionyl-(S)-S-oxide-[protein] + [thioredoxin]-dithiol</text>
        <dbReference type="Rhea" id="RHEA:14217"/>
        <dbReference type="Rhea" id="RHEA-COMP:10698"/>
        <dbReference type="Rhea" id="RHEA-COMP:10700"/>
        <dbReference type="Rhea" id="RHEA-COMP:12313"/>
        <dbReference type="Rhea" id="RHEA-COMP:12315"/>
        <dbReference type="ChEBI" id="CHEBI:15377"/>
        <dbReference type="ChEBI" id="CHEBI:16044"/>
        <dbReference type="ChEBI" id="CHEBI:29950"/>
        <dbReference type="ChEBI" id="CHEBI:44120"/>
        <dbReference type="ChEBI" id="CHEBI:50058"/>
        <dbReference type="EC" id="1.8.4.11"/>
    </reaction>
</comment>
<comment type="catalytic activity">
    <reaction>
        <text>[thioredoxin]-disulfide + L-methionine + H2O = L-methionine (S)-S-oxide + [thioredoxin]-dithiol</text>
        <dbReference type="Rhea" id="RHEA:19993"/>
        <dbReference type="Rhea" id="RHEA-COMP:10698"/>
        <dbReference type="Rhea" id="RHEA-COMP:10700"/>
        <dbReference type="ChEBI" id="CHEBI:15377"/>
        <dbReference type="ChEBI" id="CHEBI:29950"/>
        <dbReference type="ChEBI" id="CHEBI:50058"/>
        <dbReference type="ChEBI" id="CHEBI:57844"/>
        <dbReference type="ChEBI" id="CHEBI:58772"/>
        <dbReference type="EC" id="1.8.4.11"/>
    </reaction>
</comment>
<comment type="catalytic activity">
    <reaction>
        <text>L-methionyl-[protein] + [thioredoxin]-disulfide + H2O = L-methionyl-(R)-S-oxide-[protein] + [thioredoxin]-dithiol</text>
        <dbReference type="Rhea" id="RHEA:24164"/>
        <dbReference type="Rhea" id="RHEA-COMP:10698"/>
        <dbReference type="Rhea" id="RHEA-COMP:10700"/>
        <dbReference type="Rhea" id="RHEA-COMP:12313"/>
        <dbReference type="Rhea" id="RHEA-COMP:12314"/>
        <dbReference type="ChEBI" id="CHEBI:15377"/>
        <dbReference type="ChEBI" id="CHEBI:16044"/>
        <dbReference type="ChEBI" id="CHEBI:29950"/>
        <dbReference type="ChEBI" id="CHEBI:45764"/>
        <dbReference type="ChEBI" id="CHEBI:50058"/>
        <dbReference type="EC" id="1.8.4.12"/>
    </reaction>
</comment>
<comment type="similarity">
    <text evidence="3">In the N-terminal section; belongs to the MsrA Met sulfoxide reductase family.</text>
</comment>
<comment type="similarity">
    <text evidence="3">In the C-terminal section; belongs to the MsrB Met sulfoxide reductase family.</text>
</comment>
<reference key="1">
    <citation type="journal article" date="2001" name="Science">
        <title>Complete genome sequence of a virulent isolate of Streptococcus pneumoniae.</title>
        <authorList>
            <person name="Tettelin H."/>
            <person name="Nelson K.E."/>
            <person name="Paulsen I.T."/>
            <person name="Eisen J.A."/>
            <person name="Read T.D."/>
            <person name="Peterson S.N."/>
            <person name="Heidelberg J.F."/>
            <person name="DeBoy R.T."/>
            <person name="Haft D.H."/>
            <person name="Dodson R.J."/>
            <person name="Durkin A.S."/>
            <person name="Gwinn M.L."/>
            <person name="Kolonay J.F."/>
            <person name="Nelson W.C."/>
            <person name="Peterson J.D."/>
            <person name="Umayam L.A."/>
            <person name="White O."/>
            <person name="Salzberg S.L."/>
            <person name="Lewis M.R."/>
            <person name="Radune D."/>
            <person name="Holtzapple E.K."/>
            <person name="Khouri H.M."/>
            <person name="Wolf A.M."/>
            <person name="Utterback T.R."/>
            <person name="Hansen C.L."/>
            <person name="McDonald L.A."/>
            <person name="Feldblyum T.V."/>
            <person name="Angiuoli S.V."/>
            <person name="Dickinson T."/>
            <person name="Hickey E.K."/>
            <person name="Holt I.E."/>
            <person name="Loftus B.J."/>
            <person name="Yang F."/>
            <person name="Smith H.O."/>
            <person name="Venter J.C."/>
            <person name="Dougherty B.A."/>
            <person name="Morrison D.A."/>
            <person name="Hollingshead S.K."/>
            <person name="Fraser C.M."/>
        </authorList>
    </citation>
    <scope>NUCLEOTIDE SEQUENCE [LARGE SCALE GENOMIC DNA]</scope>
    <source>
        <strain>ATCC BAA-334 / TIGR4</strain>
    </source>
</reference>
<gene>
    <name type="primary">msrAB2</name>
    <name type="synonym">msrA</name>
    <name type="ordered locus">SP_0660</name>
</gene>
<keyword id="KW-0511">Multifunctional enzyme</keyword>
<keyword id="KW-0560">Oxidoreductase</keyword>
<keyword id="KW-1185">Reference proteome</keyword>